<evidence type="ECO:0000255" key="1">
    <source>
        <dbReference type="HAMAP-Rule" id="MF_00919"/>
    </source>
</evidence>
<accession>C7RB40</accession>
<gene>
    <name evidence="1" type="primary">rmf</name>
    <name type="ordered locus">Kkor_1063</name>
</gene>
<organism>
    <name type="scientific">Kangiella koreensis (strain DSM 16069 / JCM 12317 / KCTC 12182 / SW-125)</name>
    <dbReference type="NCBI Taxonomy" id="523791"/>
    <lineage>
        <taxon>Bacteria</taxon>
        <taxon>Pseudomonadati</taxon>
        <taxon>Pseudomonadota</taxon>
        <taxon>Gammaproteobacteria</taxon>
        <taxon>Kangiellales</taxon>
        <taxon>Kangiellaceae</taxon>
        <taxon>Kangiella</taxon>
    </lineage>
</organism>
<reference key="1">
    <citation type="journal article" date="2009" name="Stand. Genomic Sci.">
        <title>Complete genome sequence of Kangiella koreensis type strain (SW-125).</title>
        <authorList>
            <person name="Han C."/>
            <person name="Sikorski J."/>
            <person name="Lapidus A."/>
            <person name="Nolan M."/>
            <person name="Glavina Del Rio T."/>
            <person name="Tice H."/>
            <person name="Cheng J.F."/>
            <person name="Lucas S."/>
            <person name="Chen F."/>
            <person name="Copeland A."/>
            <person name="Ivanova N."/>
            <person name="Mavromatis K."/>
            <person name="Ovchinnikova G."/>
            <person name="Pati A."/>
            <person name="Bruce D."/>
            <person name="Goodwin L."/>
            <person name="Pitluck S."/>
            <person name="Chen A."/>
            <person name="Palaniappan K."/>
            <person name="Land M."/>
            <person name="Hauser L."/>
            <person name="Chang Y.J."/>
            <person name="Jeffries C.D."/>
            <person name="Chain P."/>
            <person name="Saunders E."/>
            <person name="Brettin T."/>
            <person name="Goker M."/>
            <person name="Tindall B.J."/>
            <person name="Bristow J."/>
            <person name="Eisen J.A."/>
            <person name="Markowitz V."/>
            <person name="Hugenholtz P."/>
            <person name="Kyrpides N.C."/>
            <person name="Klenk H.P."/>
            <person name="Detter J.C."/>
        </authorList>
    </citation>
    <scope>NUCLEOTIDE SEQUENCE [LARGE SCALE GENOMIC DNA]</scope>
    <source>
        <strain>DSM 16069 / JCM 12317 / KCTC 12182 / SW-125</strain>
    </source>
</reference>
<proteinExistence type="inferred from homology"/>
<sequence length="60" mass="7014">MKRQKRDKLQRAHTKGFNAALQGQSKENCPFEELNAREEWLGGWREGREAFTTNGMKAYI</sequence>
<feature type="chain" id="PRO_0000416475" description="Ribosome modulation factor">
    <location>
        <begin position="1"/>
        <end position="60"/>
    </location>
</feature>
<name>RMF_KANKD</name>
<keyword id="KW-0963">Cytoplasm</keyword>
<keyword id="KW-1185">Reference proteome</keyword>
<keyword id="KW-0810">Translation regulation</keyword>
<protein>
    <recommendedName>
        <fullName evidence="1">Ribosome modulation factor</fullName>
        <shortName evidence="1">RMF</shortName>
    </recommendedName>
</protein>
<comment type="function">
    <text evidence="1">During stationary phase, converts 70S ribosomes to an inactive dimeric form (100S ribosomes).</text>
</comment>
<comment type="subcellular location">
    <subcellularLocation>
        <location evidence="1">Cytoplasm</location>
    </subcellularLocation>
</comment>
<comment type="similarity">
    <text evidence="1">Belongs to the ribosome modulation factor family.</text>
</comment>
<dbReference type="EMBL" id="CP001707">
    <property type="protein sequence ID" value="ACV26482.1"/>
    <property type="molecule type" value="Genomic_DNA"/>
</dbReference>
<dbReference type="RefSeq" id="WP_012800996.1">
    <property type="nucleotide sequence ID" value="NC_013166.1"/>
</dbReference>
<dbReference type="SMR" id="C7RB40"/>
<dbReference type="FunCoup" id="C7RB40">
    <property type="interactions" value="82"/>
</dbReference>
<dbReference type="STRING" id="523791.Kkor_1063"/>
<dbReference type="KEGG" id="kko:Kkor_1063"/>
<dbReference type="eggNOG" id="COG3130">
    <property type="taxonomic scope" value="Bacteria"/>
</dbReference>
<dbReference type="HOGENOM" id="CLU_203350_0_0_6"/>
<dbReference type="InParanoid" id="C7RB40"/>
<dbReference type="OrthoDB" id="5917763at2"/>
<dbReference type="Proteomes" id="UP000001231">
    <property type="component" value="Chromosome"/>
</dbReference>
<dbReference type="GO" id="GO:0005737">
    <property type="term" value="C:cytoplasm"/>
    <property type="evidence" value="ECO:0007669"/>
    <property type="project" value="UniProtKB-SubCell"/>
</dbReference>
<dbReference type="GO" id="GO:0006417">
    <property type="term" value="P:regulation of translation"/>
    <property type="evidence" value="ECO:0007669"/>
    <property type="project" value="UniProtKB-UniRule"/>
</dbReference>
<dbReference type="Gene3D" id="1.10.10.620">
    <property type="entry name" value="ribosome modulation factor like domain"/>
    <property type="match status" value="1"/>
</dbReference>
<dbReference type="HAMAP" id="MF_00919">
    <property type="entry name" value="RMF"/>
    <property type="match status" value="1"/>
</dbReference>
<dbReference type="InterPro" id="IPR007040">
    <property type="entry name" value="Ribosome_modulation_factor"/>
</dbReference>
<dbReference type="InterPro" id="IPR023200">
    <property type="entry name" value="RMF_sf"/>
</dbReference>
<dbReference type="NCBIfam" id="NF011162">
    <property type="entry name" value="PRK14563.1"/>
    <property type="match status" value="1"/>
</dbReference>
<dbReference type="NCBIfam" id="NF041886">
    <property type="entry name" value="Rmf_CrpP_fam"/>
    <property type="match status" value="1"/>
</dbReference>
<dbReference type="Pfam" id="PF04957">
    <property type="entry name" value="RMF"/>
    <property type="match status" value="1"/>
</dbReference>